<keyword id="KW-0998">Cell outer membrane</keyword>
<keyword id="KW-0472">Membrane</keyword>
<keyword id="KW-0732">Signal</keyword>
<feature type="signal peptide" evidence="1">
    <location>
        <begin position="1"/>
        <end position="24"/>
    </location>
</feature>
<feature type="chain" id="PRO_5000200917" description="LPS-assembly protein LptD">
    <location>
        <begin position="25"/>
        <end position="788"/>
    </location>
</feature>
<comment type="function">
    <text evidence="1">Together with LptE, is involved in the assembly of lipopolysaccharide (LPS) at the surface of the outer membrane.</text>
</comment>
<comment type="subunit">
    <text evidence="1">Component of the lipopolysaccharide transport and assembly complex. Interacts with LptE and LptA.</text>
</comment>
<comment type="subcellular location">
    <subcellularLocation>
        <location evidence="1">Cell outer membrane</location>
    </subcellularLocation>
</comment>
<comment type="similarity">
    <text evidence="1">Belongs to the LptD family.</text>
</comment>
<name>LPTD_YERE8</name>
<reference key="1">
    <citation type="journal article" date="2006" name="PLoS Genet.">
        <title>The complete genome sequence and comparative genome analysis of the high pathogenicity Yersinia enterocolitica strain 8081.</title>
        <authorList>
            <person name="Thomson N.R."/>
            <person name="Howard S."/>
            <person name="Wren B.W."/>
            <person name="Holden M.T.G."/>
            <person name="Crossman L."/>
            <person name="Challis G.L."/>
            <person name="Churcher C."/>
            <person name="Mungall K."/>
            <person name="Brooks K."/>
            <person name="Chillingworth T."/>
            <person name="Feltwell T."/>
            <person name="Abdellah Z."/>
            <person name="Hauser H."/>
            <person name="Jagels K."/>
            <person name="Maddison M."/>
            <person name="Moule S."/>
            <person name="Sanders M."/>
            <person name="Whitehead S."/>
            <person name="Quail M.A."/>
            <person name="Dougan G."/>
            <person name="Parkhill J."/>
            <person name="Prentice M.B."/>
        </authorList>
    </citation>
    <scope>NUCLEOTIDE SEQUENCE [LARGE SCALE GENOMIC DNA]</scope>
    <source>
        <strain>NCTC 13174 / 8081</strain>
    </source>
</reference>
<organism>
    <name type="scientific">Yersinia enterocolitica serotype O:8 / biotype 1B (strain NCTC 13174 / 8081)</name>
    <dbReference type="NCBI Taxonomy" id="393305"/>
    <lineage>
        <taxon>Bacteria</taxon>
        <taxon>Pseudomonadati</taxon>
        <taxon>Pseudomonadota</taxon>
        <taxon>Gammaproteobacteria</taxon>
        <taxon>Enterobacterales</taxon>
        <taxon>Yersiniaceae</taxon>
        <taxon>Yersinia</taxon>
    </lineage>
</organism>
<evidence type="ECO:0000255" key="1">
    <source>
        <dbReference type="HAMAP-Rule" id="MF_01411"/>
    </source>
</evidence>
<gene>
    <name evidence="1" type="primary">lptD</name>
    <name type="synonym">imp</name>
    <name type="synonym">ostA</name>
    <name type="ordered locus">YE0633</name>
</gene>
<dbReference type="EMBL" id="AM286415">
    <property type="protein sequence ID" value="CAL10745.1"/>
    <property type="molecule type" value="Genomic_DNA"/>
</dbReference>
<dbReference type="RefSeq" id="WP_011815546.1">
    <property type="nucleotide sequence ID" value="NC_008800.1"/>
</dbReference>
<dbReference type="RefSeq" id="YP_001004985.1">
    <property type="nucleotide sequence ID" value="NC_008800.1"/>
</dbReference>
<dbReference type="SMR" id="A1JJF7"/>
<dbReference type="KEGG" id="yen:YE0633"/>
<dbReference type="PATRIC" id="fig|393305.7.peg.726"/>
<dbReference type="eggNOG" id="COG1452">
    <property type="taxonomic scope" value="Bacteria"/>
</dbReference>
<dbReference type="HOGENOM" id="CLU_009039_2_0_6"/>
<dbReference type="OrthoDB" id="9760225at2"/>
<dbReference type="Proteomes" id="UP000000642">
    <property type="component" value="Chromosome"/>
</dbReference>
<dbReference type="GO" id="GO:0009279">
    <property type="term" value="C:cell outer membrane"/>
    <property type="evidence" value="ECO:0007669"/>
    <property type="project" value="UniProtKB-SubCell"/>
</dbReference>
<dbReference type="GO" id="GO:1990351">
    <property type="term" value="C:transporter complex"/>
    <property type="evidence" value="ECO:0007669"/>
    <property type="project" value="TreeGrafter"/>
</dbReference>
<dbReference type="GO" id="GO:0043165">
    <property type="term" value="P:Gram-negative-bacterium-type cell outer membrane assembly"/>
    <property type="evidence" value="ECO:0007669"/>
    <property type="project" value="UniProtKB-UniRule"/>
</dbReference>
<dbReference type="GO" id="GO:0015920">
    <property type="term" value="P:lipopolysaccharide transport"/>
    <property type="evidence" value="ECO:0007669"/>
    <property type="project" value="InterPro"/>
</dbReference>
<dbReference type="Gene3D" id="2.60.450.10">
    <property type="entry name" value="Lipopolysaccharide (LPS) transport protein A like domain"/>
    <property type="match status" value="1"/>
</dbReference>
<dbReference type="HAMAP" id="MF_01411">
    <property type="entry name" value="LPS_assembly_LptD"/>
    <property type="match status" value="1"/>
</dbReference>
<dbReference type="InterPro" id="IPR020889">
    <property type="entry name" value="LipoPS_assembly_LptD"/>
</dbReference>
<dbReference type="InterPro" id="IPR050218">
    <property type="entry name" value="LptD"/>
</dbReference>
<dbReference type="InterPro" id="IPR007543">
    <property type="entry name" value="LptD_C"/>
</dbReference>
<dbReference type="InterPro" id="IPR005653">
    <property type="entry name" value="OstA-like_N"/>
</dbReference>
<dbReference type="NCBIfam" id="NF002997">
    <property type="entry name" value="PRK03761.1"/>
    <property type="match status" value="1"/>
</dbReference>
<dbReference type="PANTHER" id="PTHR30189">
    <property type="entry name" value="LPS-ASSEMBLY PROTEIN"/>
    <property type="match status" value="1"/>
</dbReference>
<dbReference type="PANTHER" id="PTHR30189:SF1">
    <property type="entry name" value="LPS-ASSEMBLY PROTEIN LPTD"/>
    <property type="match status" value="1"/>
</dbReference>
<dbReference type="Pfam" id="PF04453">
    <property type="entry name" value="LptD"/>
    <property type="match status" value="1"/>
</dbReference>
<dbReference type="Pfam" id="PF03968">
    <property type="entry name" value="LptD_N"/>
    <property type="match status" value="1"/>
</dbReference>
<proteinExistence type="inferred from homology"/>
<protein>
    <recommendedName>
        <fullName evidence="1">LPS-assembly protein LptD</fullName>
    </recommendedName>
</protein>
<accession>A1JJF7</accession>
<sequence>MKKRFPTLLATLIWTALYSQHTLADLAEQCMLGVPTYDQPLVTGDPNQLPVRINADKTEANYPDNALFTGNVIVQQGNSTLTANQVELTQVQKPGEAIPVRTVTATGDVNYDDPQIKLKGPKGWSNLNTKDTDMDKGKYQMVGRQGRGDADLMKLRGQNRYTILENGTFTSCLPGDNSWSVVGSEVIHDREEQVAEIWNARFKIGKVPVFYSPYMQLPVGDKRRSGFLIPNAKYTSNNGLEFMLPYYWNIAPNFDATITPHYMERRGLQWQNEFRYLLAPGSGTMALDWLPSDRLYHGTDGTEKDPTRWLYYWGHSGVMDKVWRFNVNYTRVSDPDYFTDLTSQYGSTTDGYATQIFSVGYADQNWDATLASKQFQVFTTGGNNNAYRAQPQLDMNYYKNDIGPFDLHIYGQAAKFTSVNPENPEAERFHIEPSINLPLANGWGSLNTEAKLLATHYQQDIPNGFASNYKNQNGQDATVPNLKDSVNRVIPQFKVDGKVVFDRPMDWSEGFTQTLEPRVQYLYVPYRNQDDIYIYDTTLMQSDYSGLFRDRTYSGLDRIASANQVSTGLTSRIYDDELVERFNVSVGQIYYFSRSRTGNSETIDNSDDTGSLVWAGDTFWRINDQLGLKGGAQYDTRLGSLTLGNAVMEYRKDAERMIQLNYRYASPEYIQAAVPNVKSPGYQQGISQIGTTASWPIADRWALVGAYYYDTKANQPASQLVGVQYNTCCWAINLGYERKITGWNNQNETSKYDNKVSFNIELRGLSSDHSLGTAQMLGSGILPYQSAF</sequence>